<feature type="chain" id="PRO_1000066858" description="UPF0229 protein YeaH">
    <location>
        <begin position="1"/>
        <end position="427"/>
    </location>
</feature>
<feature type="region of interest" description="Disordered" evidence="2">
    <location>
        <begin position="79"/>
        <end position="110"/>
    </location>
</feature>
<feature type="compositionally biased region" description="Basic and acidic residues" evidence="2">
    <location>
        <begin position="79"/>
        <end position="90"/>
    </location>
</feature>
<feature type="compositionally biased region" description="Gly residues" evidence="2">
    <location>
        <begin position="92"/>
        <end position="102"/>
    </location>
</feature>
<protein>
    <recommendedName>
        <fullName evidence="1">UPF0229 protein YeaH</fullName>
    </recommendedName>
</protein>
<comment type="similarity">
    <text evidence="1">Belongs to the UPF0229 family.</text>
</comment>
<evidence type="ECO:0000255" key="1">
    <source>
        <dbReference type="HAMAP-Rule" id="MF_01232"/>
    </source>
</evidence>
<evidence type="ECO:0000256" key="2">
    <source>
        <dbReference type="SAM" id="MobiDB-lite"/>
    </source>
</evidence>
<gene>
    <name evidence="1" type="primary">yeaH</name>
    <name type="ordered locus">UTI89_C1980</name>
</gene>
<reference key="1">
    <citation type="journal article" date="2006" name="Proc. Natl. Acad. Sci. U.S.A.">
        <title>Identification of genes subject to positive selection in uropathogenic strains of Escherichia coli: a comparative genomics approach.</title>
        <authorList>
            <person name="Chen S.L."/>
            <person name="Hung C.-S."/>
            <person name="Xu J."/>
            <person name="Reigstad C.S."/>
            <person name="Magrini V."/>
            <person name="Sabo A."/>
            <person name="Blasiar D."/>
            <person name="Bieri T."/>
            <person name="Meyer R.R."/>
            <person name="Ozersky P."/>
            <person name="Armstrong J.R."/>
            <person name="Fulton R.S."/>
            <person name="Latreille J.P."/>
            <person name="Spieth J."/>
            <person name="Hooton T.M."/>
            <person name="Mardis E.R."/>
            <person name="Hultgren S.J."/>
            <person name="Gordon J.I."/>
        </authorList>
    </citation>
    <scope>NUCLEOTIDE SEQUENCE [LARGE SCALE GENOMIC DNA]</scope>
    <source>
        <strain>UTI89 / UPEC</strain>
    </source>
</reference>
<accession>Q1RB08</accession>
<dbReference type="EMBL" id="CP000243">
    <property type="protein sequence ID" value="ABE07456.1"/>
    <property type="molecule type" value="Genomic_DNA"/>
</dbReference>
<dbReference type="RefSeq" id="WP_000219684.1">
    <property type="nucleotide sequence ID" value="NZ_CP064825.1"/>
</dbReference>
<dbReference type="SMR" id="Q1RB08"/>
<dbReference type="KEGG" id="eci:UTI89_C1980"/>
<dbReference type="HOGENOM" id="CLU_049702_0_0_6"/>
<dbReference type="Proteomes" id="UP000001952">
    <property type="component" value="Chromosome"/>
</dbReference>
<dbReference type="HAMAP" id="MF_01232">
    <property type="entry name" value="UPF0229"/>
    <property type="match status" value="1"/>
</dbReference>
<dbReference type="InterPro" id="IPR006698">
    <property type="entry name" value="UPF0229"/>
</dbReference>
<dbReference type="NCBIfam" id="NF003707">
    <property type="entry name" value="PRK05325.1-2"/>
    <property type="match status" value="1"/>
</dbReference>
<dbReference type="NCBIfam" id="NF003708">
    <property type="entry name" value="PRK05325.1-3"/>
    <property type="match status" value="1"/>
</dbReference>
<dbReference type="PANTHER" id="PTHR30510">
    <property type="entry name" value="UPF0229 PROTEIN YEAH"/>
    <property type="match status" value="1"/>
</dbReference>
<dbReference type="PANTHER" id="PTHR30510:SF2">
    <property type="entry name" value="UPF0229 PROTEIN YEAH"/>
    <property type="match status" value="1"/>
</dbReference>
<dbReference type="Pfam" id="PF04285">
    <property type="entry name" value="DUF444"/>
    <property type="match status" value="1"/>
</dbReference>
<sequence>MTWFIDRRLNGKNKSMVNRQRFLRRYKAQIKQSISEAINKRSVTDVDSGESVSIPTEDISEPMFHQGRGGLRHRVHPGNDHFVQNDRIERPQGGGGGSGSGQGQASQDGEGQDEFVFQISKDEYLDLLFEDLALPNLKQNQQRQLTEYKTHRAGYTANGVPANISVVRSLQNSLARRTAMTAGKRRELHALEENLAIISNSEPAQLLEEERLRKEIAELRAKIERVPFIDTFDLRYKNYEKRPDPSSQAVMFCLMDVSGSMDQSTKDMAKRFYILLYLFLSRTYKNVEVVYIRHHTQAKEVDEHEFFYSQETGGTIVSSALKLMDEVVKERYNPAQWNIYAAQASDGDNWADDSPLCHEILAKKILPVVRYYSYIEITRRAHQTLWREYEHLQSTFDNFAMQHIRDQDDIYPVFRELFHKQNATAKD</sequence>
<organism>
    <name type="scientific">Escherichia coli (strain UTI89 / UPEC)</name>
    <dbReference type="NCBI Taxonomy" id="364106"/>
    <lineage>
        <taxon>Bacteria</taxon>
        <taxon>Pseudomonadati</taxon>
        <taxon>Pseudomonadota</taxon>
        <taxon>Gammaproteobacteria</taxon>
        <taxon>Enterobacterales</taxon>
        <taxon>Enterobacteriaceae</taxon>
        <taxon>Escherichia</taxon>
    </lineage>
</organism>
<proteinExistence type="inferred from homology"/>
<name>YEAH_ECOUT</name>